<evidence type="ECO:0000255" key="1">
    <source>
        <dbReference type="HAMAP-Rule" id="MF_00191"/>
    </source>
</evidence>
<protein>
    <recommendedName>
        <fullName evidence="1">4-hydroxy-3-methylbut-2-enyl diphosphate reductase</fullName>
        <shortName evidence="1">HMBPP reductase</shortName>
        <ecNumber evidence="1">1.17.7.4</ecNumber>
    </recommendedName>
</protein>
<name>ISPH_RALN1</name>
<reference key="1">
    <citation type="journal article" date="2002" name="Nature">
        <title>Genome sequence of the plant pathogen Ralstonia solanacearum.</title>
        <authorList>
            <person name="Salanoubat M."/>
            <person name="Genin S."/>
            <person name="Artiguenave F."/>
            <person name="Gouzy J."/>
            <person name="Mangenot S."/>
            <person name="Arlat M."/>
            <person name="Billault A."/>
            <person name="Brottier P."/>
            <person name="Camus J.-C."/>
            <person name="Cattolico L."/>
            <person name="Chandler M."/>
            <person name="Choisne N."/>
            <person name="Claudel-Renard C."/>
            <person name="Cunnac S."/>
            <person name="Demange N."/>
            <person name="Gaspin C."/>
            <person name="Lavie M."/>
            <person name="Moisan A."/>
            <person name="Robert C."/>
            <person name="Saurin W."/>
            <person name="Schiex T."/>
            <person name="Siguier P."/>
            <person name="Thebault P."/>
            <person name="Whalen M."/>
            <person name="Wincker P."/>
            <person name="Levy M."/>
            <person name="Weissenbach J."/>
            <person name="Boucher C.A."/>
        </authorList>
    </citation>
    <scope>NUCLEOTIDE SEQUENCE [LARGE SCALE GENOMIC DNA]</scope>
    <source>
        <strain>ATCC BAA-1114 / GMI1000</strain>
    </source>
</reference>
<feature type="chain" id="PRO_0000128861" description="4-hydroxy-3-methylbut-2-enyl diphosphate reductase">
    <location>
        <begin position="1"/>
        <end position="324"/>
    </location>
</feature>
<feature type="active site" description="Proton donor" evidence="1">
    <location>
        <position position="142"/>
    </location>
</feature>
<feature type="binding site" evidence="1">
    <location>
        <position position="28"/>
    </location>
    <ligand>
        <name>[4Fe-4S] cluster</name>
        <dbReference type="ChEBI" id="CHEBI:49883"/>
    </ligand>
</feature>
<feature type="binding site" evidence="1">
    <location>
        <position position="57"/>
    </location>
    <ligand>
        <name>(2E)-4-hydroxy-3-methylbut-2-enyl diphosphate</name>
        <dbReference type="ChEBI" id="CHEBI:128753"/>
    </ligand>
</feature>
<feature type="binding site" evidence="1">
    <location>
        <position position="57"/>
    </location>
    <ligand>
        <name>dimethylallyl diphosphate</name>
        <dbReference type="ChEBI" id="CHEBI:57623"/>
    </ligand>
</feature>
<feature type="binding site" evidence="1">
    <location>
        <position position="57"/>
    </location>
    <ligand>
        <name>isopentenyl diphosphate</name>
        <dbReference type="ChEBI" id="CHEBI:128769"/>
    </ligand>
</feature>
<feature type="binding site" evidence="1">
    <location>
        <position position="90"/>
    </location>
    <ligand>
        <name>(2E)-4-hydroxy-3-methylbut-2-enyl diphosphate</name>
        <dbReference type="ChEBI" id="CHEBI:128753"/>
    </ligand>
</feature>
<feature type="binding site" evidence="1">
    <location>
        <position position="90"/>
    </location>
    <ligand>
        <name>dimethylallyl diphosphate</name>
        <dbReference type="ChEBI" id="CHEBI:57623"/>
    </ligand>
</feature>
<feature type="binding site" evidence="1">
    <location>
        <position position="90"/>
    </location>
    <ligand>
        <name>isopentenyl diphosphate</name>
        <dbReference type="ChEBI" id="CHEBI:128769"/>
    </ligand>
</feature>
<feature type="binding site" evidence="1">
    <location>
        <position position="112"/>
    </location>
    <ligand>
        <name>[4Fe-4S] cluster</name>
        <dbReference type="ChEBI" id="CHEBI:49883"/>
    </ligand>
</feature>
<feature type="binding site" evidence="1">
    <location>
        <position position="140"/>
    </location>
    <ligand>
        <name>(2E)-4-hydroxy-3-methylbut-2-enyl diphosphate</name>
        <dbReference type="ChEBI" id="CHEBI:128753"/>
    </ligand>
</feature>
<feature type="binding site" evidence="1">
    <location>
        <position position="140"/>
    </location>
    <ligand>
        <name>dimethylallyl diphosphate</name>
        <dbReference type="ChEBI" id="CHEBI:57623"/>
    </ligand>
</feature>
<feature type="binding site" evidence="1">
    <location>
        <position position="140"/>
    </location>
    <ligand>
        <name>isopentenyl diphosphate</name>
        <dbReference type="ChEBI" id="CHEBI:128769"/>
    </ligand>
</feature>
<feature type="binding site" evidence="1">
    <location>
        <position position="180"/>
    </location>
    <ligand>
        <name>(2E)-4-hydroxy-3-methylbut-2-enyl diphosphate</name>
        <dbReference type="ChEBI" id="CHEBI:128753"/>
    </ligand>
</feature>
<feature type="binding site" evidence="1">
    <location>
        <position position="210"/>
    </location>
    <ligand>
        <name>[4Fe-4S] cluster</name>
        <dbReference type="ChEBI" id="CHEBI:49883"/>
    </ligand>
</feature>
<feature type="binding site" evidence="1">
    <location>
        <position position="238"/>
    </location>
    <ligand>
        <name>(2E)-4-hydroxy-3-methylbut-2-enyl diphosphate</name>
        <dbReference type="ChEBI" id="CHEBI:128753"/>
    </ligand>
</feature>
<feature type="binding site" evidence="1">
    <location>
        <position position="238"/>
    </location>
    <ligand>
        <name>dimethylallyl diphosphate</name>
        <dbReference type="ChEBI" id="CHEBI:57623"/>
    </ligand>
</feature>
<feature type="binding site" evidence="1">
    <location>
        <position position="238"/>
    </location>
    <ligand>
        <name>isopentenyl diphosphate</name>
        <dbReference type="ChEBI" id="CHEBI:128769"/>
    </ligand>
</feature>
<feature type="binding site" evidence="1">
    <location>
        <position position="239"/>
    </location>
    <ligand>
        <name>(2E)-4-hydroxy-3-methylbut-2-enyl diphosphate</name>
        <dbReference type="ChEBI" id="CHEBI:128753"/>
    </ligand>
</feature>
<feature type="binding site" evidence="1">
    <location>
        <position position="239"/>
    </location>
    <ligand>
        <name>dimethylallyl diphosphate</name>
        <dbReference type="ChEBI" id="CHEBI:57623"/>
    </ligand>
</feature>
<feature type="binding site" evidence="1">
    <location>
        <position position="239"/>
    </location>
    <ligand>
        <name>isopentenyl diphosphate</name>
        <dbReference type="ChEBI" id="CHEBI:128769"/>
    </ligand>
</feature>
<feature type="binding site" evidence="1">
    <location>
        <position position="240"/>
    </location>
    <ligand>
        <name>(2E)-4-hydroxy-3-methylbut-2-enyl diphosphate</name>
        <dbReference type="ChEBI" id="CHEBI:128753"/>
    </ligand>
</feature>
<feature type="binding site" evidence="1">
    <location>
        <position position="240"/>
    </location>
    <ligand>
        <name>dimethylallyl diphosphate</name>
        <dbReference type="ChEBI" id="CHEBI:57623"/>
    </ligand>
</feature>
<feature type="binding site" evidence="1">
    <location>
        <position position="240"/>
    </location>
    <ligand>
        <name>isopentenyl diphosphate</name>
        <dbReference type="ChEBI" id="CHEBI:128769"/>
    </ligand>
</feature>
<feature type="binding site" evidence="1">
    <location>
        <position position="282"/>
    </location>
    <ligand>
        <name>(2E)-4-hydroxy-3-methylbut-2-enyl diphosphate</name>
        <dbReference type="ChEBI" id="CHEBI:128753"/>
    </ligand>
</feature>
<feature type="binding site" evidence="1">
    <location>
        <position position="282"/>
    </location>
    <ligand>
        <name>dimethylallyl diphosphate</name>
        <dbReference type="ChEBI" id="CHEBI:57623"/>
    </ligand>
</feature>
<feature type="binding site" evidence="1">
    <location>
        <position position="282"/>
    </location>
    <ligand>
        <name>isopentenyl diphosphate</name>
        <dbReference type="ChEBI" id="CHEBI:128769"/>
    </ligand>
</feature>
<organism>
    <name type="scientific">Ralstonia nicotianae (strain ATCC BAA-1114 / GMI1000)</name>
    <name type="common">Ralstonia solanacearum</name>
    <dbReference type="NCBI Taxonomy" id="267608"/>
    <lineage>
        <taxon>Bacteria</taxon>
        <taxon>Pseudomonadati</taxon>
        <taxon>Pseudomonadota</taxon>
        <taxon>Betaproteobacteria</taxon>
        <taxon>Burkholderiales</taxon>
        <taxon>Burkholderiaceae</taxon>
        <taxon>Ralstonia</taxon>
        <taxon>Ralstonia solanacearum species complex</taxon>
    </lineage>
</organism>
<proteinExistence type="inferred from homology"/>
<keyword id="KW-0004">4Fe-4S</keyword>
<keyword id="KW-0408">Iron</keyword>
<keyword id="KW-0411">Iron-sulfur</keyword>
<keyword id="KW-0414">Isoprene biosynthesis</keyword>
<keyword id="KW-0479">Metal-binding</keyword>
<keyword id="KW-0560">Oxidoreductase</keyword>
<keyword id="KW-1185">Reference proteome</keyword>
<comment type="function">
    <text evidence="1">Catalyzes the conversion of 1-hydroxy-2-methyl-2-(E)-butenyl 4-diphosphate (HMBPP) into a mixture of isopentenyl diphosphate (IPP) and dimethylallyl diphosphate (DMAPP). Acts in the terminal step of the DOXP/MEP pathway for isoprenoid precursor biosynthesis.</text>
</comment>
<comment type="catalytic activity">
    <reaction evidence="1">
        <text>isopentenyl diphosphate + 2 oxidized [2Fe-2S]-[ferredoxin] + H2O = (2E)-4-hydroxy-3-methylbut-2-enyl diphosphate + 2 reduced [2Fe-2S]-[ferredoxin] + 2 H(+)</text>
        <dbReference type="Rhea" id="RHEA:24488"/>
        <dbReference type="Rhea" id="RHEA-COMP:10000"/>
        <dbReference type="Rhea" id="RHEA-COMP:10001"/>
        <dbReference type="ChEBI" id="CHEBI:15377"/>
        <dbReference type="ChEBI" id="CHEBI:15378"/>
        <dbReference type="ChEBI" id="CHEBI:33737"/>
        <dbReference type="ChEBI" id="CHEBI:33738"/>
        <dbReference type="ChEBI" id="CHEBI:128753"/>
        <dbReference type="ChEBI" id="CHEBI:128769"/>
        <dbReference type="EC" id="1.17.7.4"/>
    </reaction>
</comment>
<comment type="catalytic activity">
    <reaction evidence="1">
        <text>dimethylallyl diphosphate + 2 oxidized [2Fe-2S]-[ferredoxin] + H2O = (2E)-4-hydroxy-3-methylbut-2-enyl diphosphate + 2 reduced [2Fe-2S]-[ferredoxin] + 2 H(+)</text>
        <dbReference type="Rhea" id="RHEA:24825"/>
        <dbReference type="Rhea" id="RHEA-COMP:10000"/>
        <dbReference type="Rhea" id="RHEA-COMP:10001"/>
        <dbReference type="ChEBI" id="CHEBI:15377"/>
        <dbReference type="ChEBI" id="CHEBI:15378"/>
        <dbReference type="ChEBI" id="CHEBI:33737"/>
        <dbReference type="ChEBI" id="CHEBI:33738"/>
        <dbReference type="ChEBI" id="CHEBI:57623"/>
        <dbReference type="ChEBI" id="CHEBI:128753"/>
        <dbReference type="EC" id="1.17.7.4"/>
    </reaction>
</comment>
<comment type="cofactor">
    <cofactor evidence="1">
        <name>[4Fe-4S] cluster</name>
        <dbReference type="ChEBI" id="CHEBI:49883"/>
    </cofactor>
    <text evidence="1">Binds 1 [4Fe-4S] cluster per subunit.</text>
</comment>
<comment type="pathway">
    <text evidence="1">Isoprenoid biosynthesis; dimethylallyl diphosphate biosynthesis; dimethylallyl diphosphate from (2E)-4-hydroxy-3-methylbutenyl diphosphate: step 1/1.</text>
</comment>
<comment type="pathway">
    <text evidence="1">Isoprenoid biosynthesis; isopentenyl diphosphate biosynthesis via DXP pathway; isopentenyl diphosphate from 1-deoxy-D-xylulose 5-phosphate: step 6/6.</text>
</comment>
<comment type="similarity">
    <text evidence="1">Belongs to the IspH family.</text>
</comment>
<sequence length="324" mass="35145">MSTTENAAIEPVTGADAEVLLAQPRGFCAGVDRAIEIVERALQRFGAPIYVRHEIVHNAYVVSDLRSKGAVFVQELDDVPVGGTVIFSAHGVSRAVRQAAEARGLRVFDATCPLVTKVHVEVSKMRTQGFEIIMIGHKGHPEVEGTMGQADDGMLLVESVDDVARLAVKDPARLAYVTQTTLSVDETQEIVAAIKARFPAVHEPKKQDICYATQNRQDAVKFMAPQVEVVIVVGSPNSSNSNRLRELAEKLGVPAYMVDTPEQVRPEWLAGKRRVGLTAGASAPEELAQSIVDRLRALGARSVRPLDGIQENMSFPLPRGLQIN</sequence>
<accession>P58677</accession>
<dbReference type="EC" id="1.17.7.4" evidence="1"/>
<dbReference type="EMBL" id="AL646052">
    <property type="protein sequence ID" value="CAD16149.1"/>
    <property type="molecule type" value="Genomic_DNA"/>
</dbReference>
<dbReference type="RefSeq" id="WP_011002361.1">
    <property type="nucleotide sequence ID" value="NC_003295.1"/>
</dbReference>
<dbReference type="SMR" id="P58677"/>
<dbReference type="STRING" id="267608.RSc2442"/>
<dbReference type="EnsemblBacteria" id="CAD16149">
    <property type="protein sequence ID" value="CAD16149"/>
    <property type="gene ID" value="RSc2442"/>
</dbReference>
<dbReference type="KEGG" id="rso:RSc2442"/>
<dbReference type="eggNOG" id="COG0761">
    <property type="taxonomic scope" value="Bacteria"/>
</dbReference>
<dbReference type="HOGENOM" id="CLU_027486_1_0_4"/>
<dbReference type="UniPathway" id="UPA00056">
    <property type="reaction ID" value="UER00097"/>
</dbReference>
<dbReference type="UniPathway" id="UPA00059">
    <property type="reaction ID" value="UER00105"/>
</dbReference>
<dbReference type="Proteomes" id="UP000001436">
    <property type="component" value="Chromosome"/>
</dbReference>
<dbReference type="GO" id="GO:0051539">
    <property type="term" value="F:4 iron, 4 sulfur cluster binding"/>
    <property type="evidence" value="ECO:0007669"/>
    <property type="project" value="UniProtKB-UniRule"/>
</dbReference>
<dbReference type="GO" id="GO:0051745">
    <property type="term" value="F:4-hydroxy-3-methylbut-2-enyl diphosphate reductase activity"/>
    <property type="evidence" value="ECO:0007669"/>
    <property type="project" value="UniProtKB-UniRule"/>
</dbReference>
<dbReference type="GO" id="GO:0046872">
    <property type="term" value="F:metal ion binding"/>
    <property type="evidence" value="ECO:0007669"/>
    <property type="project" value="UniProtKB-KW"/>
</dbReference>
<dbReference type="GO" id="GO:0050992">
    <property type="term" value="P:dimethylallyl diphosphate biosynthetic process"/>
    <property type="evidence" value="ECO:0007669"/>
    <property type="project" value="UniProtKB-UniRule"/>
</dbReference>
<dbReference type="GO" id="GO:0019288">
    <property type="term" value="P:isopentenyl diphosphate biosynthetic process, methylerythritol 4-phosphate pathway"/>
    <property type="evidence" value="ECO:0007669"/>
    <property type="project" value="UniProtKB-UniRule"/>
</dbReference>
<dbReference type="GO" id="GO:0016114">
    <property type="term" value="P:terpenoid biosynthetic process"/>
    <property type="evidence" value="ECO:0007669"/>
    <property type="project" value="UniProtKB-UniRule"/>
</dbReference>
<dbReference type="CDD" id="cd13944">
    <property type="entry name" value="lytB_ispH"/>
    <property type="match status" value="1"/>
</dbReference>
<dbReference type="Gene3D" id="3.40.50.11270">
    <property type="match status" value="1"/>
</dbReference>
<dbReference type="Gene3D" id="3.40.1010.20">
    <property type="entry name" value="4-hydroxy-3-methylbut-2-enyl diphosphate reductase, catalytic domain"/>
    <property type="match status" value="2"/>
</dbReference>
<dbReference type="HAMAP" id="MF_00191">
    <property type="entry name" value="IspH"/>
    <property type="match status" value="1"/>
</dbReference>
<dbReference type="InterPro" id="IPR003451">
    <property type="entry name" value="LytB/IspH"/>
</dbReference>
<dbReference type="NCBIfam" id="TIGR00216">
    <property type="entry name" value="ispH_lytB"/>
    <property type="match status" value="1"/>
</dbReference>
<dbReference type="NCBIfam" id="NF002188">
    <property type="entry name" value="PRK01045.1-2"/>
    <property type="match status" value="1"/>
</dbReference>
<dbReference type="NCBIfam" id="NF002190">
    <property type="entry name" value="PRK01045.1-4"/>
    <property type="match status" value="1"/>
</dbReference>
<dbReference type="PANTHER" id="PTHR30426">
    <property type="entry name" value="4-HYDROXY-3-METHYLBUT-2-ENYL DIPHOSPHATE REDUCTASE"/>
    <property type="match status" value="1"/>
</dbReference>
<dbReference type="PANTHER" id="PTHR30426:SF0">
    <property type="entry name" value="4-HYDROXY-3-METHYLBUT-2-ENYL DIPHOSPHATE REDUCTASE"/>
    <property type="match status" value="1"/>
</dbReference>
<dbReference type="Pfam" id="PF02401">
    <property type="entry name" value="LYTB"/>
    <property type="match status" value="1"/>
</dbReference>
<gene>
    <name evidence="1" type="primary">ispH</name>
    <name type="synonym">lytB</name>
    <name type="ordered locus">RSc2442</name>
    <name type="ORF">RS01352</name>
</gene>